<sequence length="489" mass="54810">MKYKSIGNVETKYYQIPEELVLESGKKISDVTLAYETYGTLNWDKSNAILVCHALTGDAHAAGWHEGDRKPGWWDIIIGPGKALDTRKYFIICSNVIGGCKGSTGPSSINPDTGESYGLDFPVVTIKDMVNAQKKLIDYLGISKLLAVIGGSMGGLQVLQWSVSYPDMVKKAIPIATAGYSTPQQIAFNEVGRIAIVSDPNWNSGNYYGEKEPTHGLALARMIGHITYLSDDSMHQKFGRRLQDKNEYEFDFSREFEVESYLHYQGLTFTERFDANSYLYLTKAIDYFDLTENNSLAEGLKNVEAKFLVISFTSDWLYPPYQLREIVMALSANNADVTYREIESNYGHDSFLLESGQLNYVLNNFLSHTYVSDIMIEDIATIKEGISIDEAARVMFEKEITHLPLVSSDSKLVGLVTSWDISKSIALKSDNLEEIMTKNVVTARPDEPIEKAAEKMESKDISALPVIDKDRRVIGMVTSEDISRLIEEF</sequence>
<accession>D7E9E0</accession>
<organism>
    <name type="scientific">Methanohalobium evestigatum (strain ATCC BAA-1072 / DSM 3721 / NBRC 107634 / OCM 161 / Z-7303)</name>
    <dbReference type="NCBI Taxonomy" id="644295"/>
    <lineage>
        <taxon>Archaea</taxon>
        <taxon>Methanobacteriati</taxon>
        <taxon>Methanobacteriota</taxon>
        <taxon>Stenosarchaea group</taxon>
        <taxon>Methanomicrobia</taxon>
        <taxon>Methanosarcinales</taxon>
        <taxon>Methanosarcinaceae</taxon>
        <taxon>Methanohalobium</taxon>
    </lineage>
</organism>
<proteinExistence type="evidence at protein level"/>
<feature type="chain" id="PRO_0000440287" description="Homoserine O-acetyltransferase">
    <location>
        <begin position="1"/>
        <end position="489"/>
    </location>
</feature>
<feature type="domain" description="AB hydrolase-1" evidence="1">
    <location>
        <begin position="47"/>
        <end position="354"/>
    </location>
</feature>
<feature type="domain" description="CBS 1" evidence="1">
    <location>
        <begin position="375"/>
        <end position="434"/>
    </location>
</feature>
<feature type="domain" description="CBS 2" evidence="1">
    <location>
        <begin position="436"/>
        <end position="489"/>
    </location>
</feature>
<feature type="active site" description="Nucleophile" evidence="1">
    <location>
        <position position="152"/>
    </location>
</feature>
<feature type="active site" evidence="1">
    <location>
        <position position="315"/>
    </location>
</feature>
<feature type="active site" evidence="1">
    <location>
        <position position="348"/>
    </location>
</feature>
<feature type="binding site" evidence="1">
    <location>
        <position position="221"/>
    </location>
    <ligand>
        <name>substrate</name>
    </ligand>
</feature>
<feature type="binding site" evidence="1">
    <location>
        <position position="349"/>
    </location>
    <ligand>
        <name>substrate</name>
    </ligand>
</feature>
<reference key="1">
    <citation type="submission" date="2010-06" db="EMBL/GenBank/DDBJ databases">
        <title>Complete sequence chromosome of Methanohalobium evestigatum Z-7303.</title>
        <authorList>
            <consortium name="US DOE Joint Genome Institute"/>
            <person name="Lucas S."/>
            <person name="Copeland A."/>
            <person name="Lapidus A."/>
            <person name="Cheng J.-F."/>
            <person name="Bruce D."/>
            <person name="Goodwin L."/>
            <person name="Pitluck S."/>
            <person name="Saunders E."/>
            <person name="Detter J.C."/>
            <person name="Han C."/>
            <person name="Tapia R."/>
            <person name="Land M."/>
            <person name="Hauser L."/>
            <person name="Kyrpides N."/>
            <person name="Mikhailova N."/>
            <person name="Sieprawska-Lupa M."/>
            <person name="Whitman W.B."/>
            <person name="Anderson I."/>
            <person name="Woyke T."/>
        </authorList>
    </citation>
    <scope>NUCLEOTIDE SEQUENCE [LARGE SCALE GENOMIC DNA]</scope>
    <source>
        <strain>ATCC BAA-1072 / DSM 3721 / NBRC 107634 / OCM 161 / Z-7303</strain>
    </source>
</reference>
<reference key="2">
    <citation type="journal article" date="2017" name="Nat. Chem. Biol.">
        <title>Parallel evolution of non-homologous isofunctional enzymes in methionine biosynthesis.</title>
        <authorList>
            <person name="Bastard K."/>
            <person name="Perret A."/>
            <person name="Mariage A."/>
            <person name="Bessonnet T."/>
            <person name="Pinet-Turpault A."/>
            <person name="Petit J.L."/>
            <person name="Darii E."/>
            <person name="Bazire P."/>
            <person name="Vergne-Vaxelaire C."/>
            <person name="Brewee C."/>
            <person name="Debard A."/>
            <person name="Pellouin V."/>
            <person name="Besnard-Gonnet M."/>
            <person name="Artiguenave F."/>
            <person name="Medigue C."/>
            <person name="Vallenet D."/>
            <person name="Danchin A."/>
            <person name="Zaparucha A."/>
            <person name="Weissenbach J."/>
            <person name="Salanoubat M."/>
            <person name="de Berardinis V."/>
        </authorList>
    </citation>
    <scope>FUNCTION</scope>
    <scope>CATALYTIC ACTIVITY</scope>
</reference>
<dbReference type="EC" id="2.3.1.31" evidence="1 2"/>
<dbReference type="EMBL" id="CP002069">
    <property type="protein sequence ID" value="ADI74212.1"/>
    <property type="molecule type" value="Genomic_DNA"/>
</dbReference>
<dbReference type="RefSeq" id="WP_013194777.1">
    <property type="nucleotide sequence ID" value="NC_014253.1"/>
</dbReference>
<dbReference type="SMR" id="D7E9E0"/>
<dbReference type="STRING" id="644295.Metev_1354"/>
<dbReference type="ESTHER" id="metez-metxa">
    <property type="family name" value="Homoserine_transacetylase"/>
</dbReference>
<dbReference type="GeneID" id="9346989"/>
<dbReference type="KEGG" id="mev:Metev_1354"/>
<dbReference type="HOGENOM" id="CLU_028760_1_1_2"/>
<dbReference type="OrthoDB" id="295172at2157"/>
<dbReference type="UniPathway" id="UPA00051">
    <property type="reaction ID" value="UER00074"/>
</dbReference>
<dbReference type="Proteomes" id="UP000000391">
    <property type="component" value="Chromosome"/>
</dbReference>
<dbReference type="GO" id="GO:0005737">
    <property type="term" value="C:cytoplasm"/>
    <property type="evidence" value="ECO:0007669"/>
    <property type="project" value="UniProtKB-SubCell"/>
</dbReference>
<dbReference type="GO" id="GO:0004414">
    <property type="term" value="F:homoserine O-acetyltransferase activity"/>
    <property type="evidence" value="ECO:0007669"/>
    <property type="project" value="UniProtKB-UniRule"/>
</dbReference>
<dbReference type="GO" id="GO:0009092">
    <property type="term" value="P:homoserine metabolic process"/>
    <property type="evidence" value="ECO:0007669"/>
    <property type="project" value="TreeGrafter"/>
</dbReference>
<dbReference type="GO" id="GO:0009086">
    <property type="term" value="P:methionine biosynthetic process"/>
    <property type="evidence" value="ECO:0007669"/>
    <property type="project" value="UniProtKB-UniRule"/>
</dbReference>
<dbReference type="CDD" id="cd04605">
    <property type="entry name" value="CBS_pair_arch_MET2_assoc"/>
    <property type="match status" value="1"/>
</dbReference>
<dbReference type="FunFam" id="1.10.1740.110:FF:000001">
    <property type="entry name" value="Homoserine O-acetyltransferase"/>
    <property type="match status" value="1"/>
</dbReference>
<dbReference type="Gene3D" id="1.10.1740.110">
    <property type="match status" value="1"/>
</dbReference>
<dbReference type="Gene3D" id="3.40.50.1820">
    <property type="entry name" value="alpha/beta hydrolase"/>
    <property type="match status" value="1"/>
</dbReference>
<dbReference type="Gene3D" id="3.10.580.10">
    <property type="entry name" value="CBS-domain"/>
    <property type="match status" value="1"/>
</dbReference>
<dbReference type="HAMAP" id="MF_00296">
    <property type="entry name" value="MetX_acyltransf"/>
    <property type="match status" value="1"/>
</dbReference>
<dbReference type="InterPro" id="IPR000073">
    <property type="entry name" value="AB_hydrolase_1"/>
</dbReference>
<dbReference type="InterPro" id="IPR029058">
    <property type="entry name" value="AB_hydrolase_fold"/>
</dbReference>
<dbReference type="InterPro" id="IPR000644">
    <property type="entry name" value="CBS_dom"/>
</dbReference>
<dbReference type="InterPro" id="IPR046342">
    <property type="entry name" value="CBS_dom_sf"/>
</dbReference>
<dbReference type="InterPro" id="IPR008220">
    <property type="entry name" value="HAT_MetX-like"/>
</dbReference>
<dbReference type="NCBIfam" id="TIGR01392">
    <property type="entry name" value="homoserO_Ac_trn"/>
    <property type="match status" value="1"/>
</dbReference>
<dbReference type="NCBIfam" id="NF001209">
    <property type="entry name" value="PRK00175.1"/>
    <property type="match status" value="1"/>
</dbReference>
<dbReference type="PANTHER" id="PTHR32268">
    <property type="entry name" value="HOMOSERINE O-ACETYLTRANSFERASE"/>
    <property type="match status" value="1"/>
</dbReference>
<dbReference type="PANTHER" id="PTHR32268:SF11">
    <property type="entry name" value="HOMOSERINE O-ACETYLTRANSFERASE"/>
    <property type="match status" value="1"/>
</dbReference>
<dbReference type="Pfam" id="PF00561">
    <property type="entry name" value="Abhydrolase_1"/>
    <property type="match status" value="1"/>
</dbReference>
<dbReference type="Pfam" id="PF00571">
    <property type="entry name" value="CBS"/>
    <property type="match status" value="2"/>
</dbReference>
<dbReference type="SMART" id="SM00116">
    <property type="entry name" value="CBS"/>
    <property type="match status" value="2"/>
</dbReference>
<dbReference type="SUPFAM" id="SSF53474">
    <property type="entry name" value="alpha/beta-Hydrolases"/>
    <property type="match status" value="1"/>
</dbReference>
<dbReference type="SUPFAM" id="SSF54631">
    <property type="entry name" value="CBS-domain pair"/>
    <property type="match status" value="1"/>
</dbReference>
<dbReference type="PROSITE" id="PS51371">
    <property type="entry name" value="CBS"/>
    <property type="match status" value="2"/>
</dbReference>
<gene>
    <name evidence="1 3" type="primary">metXA</name>
    <name evidence="4" type="ordered locus">Metev_1354</name>
</gene>
<name>METXA_METEZ</name>
<protein>
    <recommendedName>
        <fullName evidence="1">Homoserine O-acetyltransferase</fullName>
        <shortName evidence="1 3">HAT</shortName>
        <ecNumber evidence="1 2">2.3.1.31</ecNumber>
    </recommendedName>
    <alternativeName>
        <fullName evidence="1">Homoserine transacetylase</fullName>
        <shortName evidence="1">HTA</shortName>
    </alternativeName>
</protein>
<keyword id="KW-0012">Acyltransferase</keyword>
<keyword id="KW-0028">Amino-acid biosynthesis</keyword>
<keyword id="KW-0129">CBS domain</keyword>
<keyword id="KW-0963">Cytoplasm</keyword>
<keyword id="KW-0486">Methionine biosynthesis</keyword>
<keyword id="KW-1185">Reference proteome</keyword>
<keyword id="KW-0677">Repeat</keyword>
<keyword id="KW-0808">Transferase</keyword>
<evidence type="ECO:0000255" key="1">
    <source>
        <dbReference type="HAMAP-Rule" id="MF_00296"/>
    </source>
</evidence>
<evidence type="ECO:0000269" key="2">
    <source>
    </source>
</evidence>
<evidence type="ECO:0000303" key="3">
    <source>
    </source>
</evidence>
<evidence type="ECO:0000312" key="4">
    <source>
        <dbReference type="EMBL" id="ADI74212.1"/>
    </source>
</evidence>
<comment type="function">
    <text evidence="1 2">Transfers an acetyl group from acetyl-CoA to L-homoserine, forming acetyl-L-homoserine.</text>
</comment>
<comment type="catalytic activity">
    <reaction evidence="1 2">
        <text>L-homoserine + acetyl-CoA = O-acetyl-L-homoserine + CoA</text>
        <dbReference type="Rhea" id="RHEA:13701"/>
        <dbReference type="ChEBI" id="CHEBI:57287"/>
        <dbReference type="ChEBI" id="CHEBI:57288"/>
        <dbReference type="ChEBI" id="CHEBI:57476"/>
        <dbReference type="ChEBI" id="CHEBI:57716"/>
        <dbReference type="EC" id="2.3.1.31"/>
    </reaction>
</comment>
<comment type="pathway">
    <text evidence="1">Amino-acid biosynthesis; L-methionine biosynthesis via de novo pathway; O-acetyl-L-homoserine from L-homoserine: step 1/1.</text>
</comment>
<comment type="subunit">
    <text evidence="1">Homodimer.</text>
</comment>
<comment type="subcellular location">
    <subcellularLocation>
        <location evidence="1">Cytoplasm</location>
    </subcellularLocation>
</comment>
<comment type="similarity">
    <text evidence="1">Belongs to the AB hydrolase superfamily. MetX family.</text>
</comment>